<name>SSRP_CORK4</name>
<reference key="1">
    <citation type="journal article" date="2008" name="J. Biotechnol.">
        <title>Ultrafast pyrosequencing of Corynebacterium kroppenstedtii DSM44385 revealed insights into the physiology of a lipophilic corynebacterium that lacks mycolic acids.</title>
        <authorList>
            <person name="Tauch A."/>
            <person name="Schneider J."/>
            <person name="Szczepanowski R."/>
            <person name="Tilker A."/>
            <person name="Viehoever P."/>
            <person name="Gartemann K.-H."/>
            <person name="Arnold W."/>
            <person name="Blom J."/>
            <person name="Brinkrolf K."/>
            <person name="Brune I."/>
            <person name="Goetker S."/>
            <person name="Weisshaar B."/>
            <person name="Goesmann A."/>
            <person name="Droege M."/>
            <person name="Puehler A."/>
        </authorList>
    </citation>
    <scope>NUCLEOTIDE SEQUENCE [LARGE SCALE GENOMIC DNA]</scope>
    <source>
        <strain>DSM 44385 / JCM 11950 / CIP 105744 / CCUG 35717</strain>
    </source>
</reference>
<dbReference type="EMBL" id="CP001620">
    <property type="protein sequence ID" value="ACR18177.1"/>
    <property type="molecule type" value="Genomic_DNA"/>
</dbReference>
<dbReference type="RefSeq" id="WP_012732064.1">
    <property type="nucleotide sequence ID" value="NC_012704.1"/>
</dbReference>
<dbReference type="SMR" id="C4LK22"/>
<dbReference type="STRING" id="645127.ckrop_1439"/>
<dbReference type="KEGG" id="ckp:ckrop_1439"/>
<dbReference type="eggNOG" id="COG0691">
    <property type="taxonomic scope" value="Bacteria"/>
</dbReference>
<dbReference type="HOGENOM" id="CLU_108953_2_1_11"/>
<dbReference type="OrthoDB" id="9805462at2"/>
<dbReference type="Proteomes" id="UP000001473">
    <property type="component" value="Chromosome"/>
</dbReference>
<dbReference type="GO" id="GO:0005829">
    <property type="term" value="C:cytosol"/>
    <property type="evidence" value="ECO:0007669"/>
    <property type="project" value="TreeGrafter"/>
</dbReference>
<dbReference type="GO" id="GO:0003723">
    <property type="term" value="F:RNA binding"/>
    <property type="evidence" value="ECO:0007669"/>
    <property type="project" value="UniProtKB-UniRule"/>
</dbReference>
<dbReference type="GO" id="GO:0070929">
    <property type="term" value="P:trans-translation"/>
    <property type="evidence" value="ECO:0007669"/>
    <property type="project" value="UniProtKB-UniRule"/>
</dbReference>
<dbReference type="CDD" id="cd09294">
    <property type="entry name" value="SmpB"/>
    <property type="match status" value="1"/>
</dbReference>
<dbReference type="Gene3D" id="2.40.280.10">
    <property type="match status" value="1"/>
</dbReference>
<dbReference type="HAMAP" id="MF_00023">
    <property type="entry name" value="SmpB"/>
    <property type="match status" value="1"/>
</dbReference>
<dbReference type="InterPro" id="IPR023620">
    <property type="entry name" value="SmpB"/>
</dbReference>
<dbReference type="InterPro" id="IPR000037">
    <property type="entry name" value="SsrA-bd_prot"/>
</dbReference>
<dbReference type="InterPro" id="IPR020081">
    <property type="entry name" value="SsrA-bd_prot_CS"/>
</dbReference>
<dbReference type="NCBIfam" id="NF003843">
    <property type="entry name" value="PRK05422.1"/>
    <property type="match status" value="1"/>
</dbReference>
<dbReference type="NCBIfam" id="TIGR00086">
    <property type="entry name" value="smpB"/>
    <property type="match status" value="1"/>
</dbReference>
<dbReference type="PANTHER" id="PTHR30308:SF2">
    <property type="entry name" value="SSRA-BINDING PROTEIN"/>
    <property type="match status" value="1"/>
</dbReference>
<dbReference type="PANTHER" id="PTHR30308">
    <property type="entry name" value="TMRNA-BINDING COMPONENT OF TRANS-TRANSLATION TAGGING COMPLEX"/>
    <property type="match status" value="1"/>
</dbReference>
<dbReference type="Pfam" id="PF01668">
    <property type="entry name" value="SmpB"/>
    <property type="match status" value="1"/>
</dbReference>
<dbReference type="SUPFAM" id="SSF74982">
    <property type="entry name" value="Small protein B (SmpB)"/>
    <property type="match status" value="1"/>
</dbReference>
<dbReference type="PROSITE" id="PS01317">
    <property type="entry name" value="SSRP"/>
    <property type="match status" value="1"/>
</dbReference>
<comment type="function">
    <text evidence="1">Required for rescue of stalled ribosomes mediated by trans-translation. Binds to transfer-messenger RNA (tmRNA), required for stable association of tmRNA with ribosomes. tmRNA and SmpB together mimic tRNA shape, replacing the anticodon stem-loop with SmpB. tmRNA is encoded by the ssrA gene; the 2 termini fold to resemble tRNA(Ala) and it encodes a 'tag peptide', a short internal open reading frame. During trans-translation Ala-aminoacylated tmRNA acts like a tRNA, entering the A-site of stalled ribosomes, displacing the stalled mRNA. The ribosome then switches to translate the ORF on the tmRNA; the nascent peptide is terminated with the 'tag peptide' encoded by the tmRNA and targeted for degradation. The ribosome is freed to recommence translation, which seems to be the essential function of trans-translation.</text>
</comment>
<comment type="subcellular location">
    <subcellularLocation>
        <location evidence="1">Cytoplasm</location>
    </subcellularLocation>
    <text evidence="1">The tmRNA-SmpB complex associates with stalled 70S ribosomes.</text>
</comment>
<comment type="similarity">
    <text evidence="1">Belongs to the SmpB family.</text>
</comment>
<protein>
    <recommendedName>
        <fullName evidence="1">SsrA-binding protein</fullName>
    </recommendedName>
    <alternativeName>
        <fullName evidence="1">Small protein B</fullName>
    </alternativeName>
</protein>
<evidence type="ECO:0000255" key="1">
    <source>
        <dbReference type="HAMAP-Rule" id="MF_00023"/>
    </source>
</evidence>
<evidence type="ECO:0000256" key="2">
    <source>
        <dbReference type="SAM" id="MobiDB-lite"/>
    </source>
</evidence>
<accession>C4LK22</accession>
<proteinExistence type="inferred from homology"/>
<keyword id="KW-0963">Cytoplasm</keyword>
<keyword id="KW-1185">Reference proteome</keyword>
<keyword id="KW-0694">RNA-binding</keyword>
<organism>
    <name type="scientific">Corynebacterium kroppenstedtii (strain DSM 44385 / JCM 11950 / CIP 105744 / CCUG 35717)</name>
    <dbReference type="NCBI Taxonomy" id="645127"/>
    <lineage>
        <taxon>Bacteria</taxon>
        <taxon>Bacillati</taxon>
        <taxon>Actinomycetota</taxon>
        <taxon>Actinomycetes</taxon>
        <taxon>Mycobacteriales</taxon>
        <taxon>Corynebacteriaceae</taxon>
        <taxon>Corynebacterium</taxon>
    </lineage>
</organism>
<gene>
    <name evidence="1" type="primary">smpB</name>
    <name type="ordered locus">ckrop_1439</name>
</gene>
<feature type="chain" id="PRO_1000201929" description="SsrA-binding protein">
    <location>
        <begin position="1"/>
        <end position="183"/>
    </location>
</feature>
<feature type="region of interest" description="Disordered" evidence="2">
    <location>
        <begin position="1"/>
        <end position="27"/>
    </location>
</feature>
<feature type="compositionally biased region" description="Basic residues" evidence="2">
    <location>
        <begin position="13"/>
        <end position="27"/>
    </location>
</feature>
<sequence>MAKKATLVDHGAAKGKKKAQSKVSKKNANKRLVVATNRRARHDYTILDTWEAGIQLVGTEVKSLREGKASLIDSFATIDDGEVWLRHLHIPEYSKGHWTNHSPRRTRKLLLHRNEIDSIMGKVRDGNNTLIPLSLYFSDGKLKVELALGRGKQDYDRRQDIKRRTEEREATRALGRRVKGLTG</sequence>